<comment type="function">
    <text evidence="1">Part of the binding-protein-dependent transport system for oligopeptides; probably responsible for the translocation of the substrate across the membrane.</text>
</comment>
<comment type="subcellular location">
    <subcellularLocation>
        <location evidence="3">Cell membrane</location>
        <topology evidence="2">Multi-pass membrane protein</topology>
    </subcellularLocation>
</comment>
<comment type="similarity">
    <text evidence="3">Belongs to the binding-protein-dependent transport system permease family. OppBC subfamily.</text>
</comment>
<accession>P0A4M7</accession>
<accession>P18793</accession>
<gene>
    <name type="primary">amiC</name>
    <name type="ordered locus">SP_1890</name>
</gene>
<protein>
    <recommendedName>
        <fullName>Oligopeptide transport system permease protein AmiC</fullName>
    </recommendedName>
</protein>
<reference key="1">
    <citation type="journal article" date="1990" name="Mol. Microbiol.">
        <title>The ami locus of the Gram-positive bacterium Streptococcus pneumoniae is similar to binding protein-dependent transport operons of Gram-negative bacteria.</title>
        <authorList>
            <person name="Alloing G."/>
            <person name="Trombe M.C."/>
            <person name="Claverys J.-P."/>
        </authorList>
    </citation>
    <scope>NUCLEOTIDE SEQUENCE [GENOMIC DNA]</scope>
    <source>
        <strain>R6 / R800</strain>
    </source>
</reference>
<reference key="2">
    <citation type="journal article" date="2001" name="Science">
        <title>Complete genome sequence of a virulent isolate of Streptococcus pneumoniae.</title>
        <authorList>
            <person name="Tettelin H."/>
            <person name="Nelson K.E."/>
            <person name="Paulsen I.T."/>
            <person name="Eisen J.A."/>
            <person name="Read T.D."/>
            <person name="Peterson S.N."/>
            <person name="Heidelberg J.F."/>
            <person name="DeBoy R.T."/>
            <person name="Haft D.H."/>
            <person name="Dodson R.J."/>
            <person name="Durkin A.S."/>
            <person name="Gwinn M.L."/>
            <person name="Kolonay J.F."/>
            <person name="Nelson W.C."/>
            <person name="Peterson J.D."/>
            <person name="Umayam L.A."/>
            <person name="White O."/>
            <person name="Salzberg S.L."/>
            <person name="Lewis M.R."/>
            <person name="Radune D."/>
            <person name="Holtzapple E.K."/>
            <person name="Khouri H.M."/>
            <person name="Wolf A.M."/>
            <person name="Utterback T.R."/>
            <person name="Hansen C.L."/>
            <person name="McDonald L.A."/>
            <person name="Feldblyum T.V."/>
            <person name="Angiuoli S.V."/>
            <person name="Dickinson T."/>
            <person name="Hickey E.K."/>
            <person name="Holt I.E."/>
            <person name="Loftus B.J."/>
            <person name="Yang F."/>
            <person name="Smith H.O."/>
            <person name="Venter J.C."/>
            <person name="Dougherty B.A."/>
            <person name="Morrison D.A."/>
            <person name="Hollingshead S.K."/>
            <person name="Fraser C.M."/>
        </authorList>
    </citation>
    <scope>NUCLEOTIDE SEQUENCE [LARGE SCALE GENOMIC DNA]</scope>
    <source>
        <strain>ATCC BAA-334 / TIGR4</strain>
    </source>
</reference>
<dbReference type="EMBL" id="X17337">
    <property type="protein sequence ID" value="CAA35214.1"/>
    <property type="molecule type" value="Genomic_DNA"/>
</dbReference>
<dbReference type="EMBL" id="AE005672">
    <property type="protein sequence ID" value="AAK75961.1"/>
    <property type="molecule type" value="Genomic_DNA"/>
</dbReference>
<dbReference type="PIR" id="H95220">
    <property type="entry name" value="H95220"/>
</dbReference>
<dbReference type="PIR" id="S11150">
    <property type="entry name" value="S11150"/>
</dbReference>
<dbReference type="RefSeq" id="WP_000759901.1">
    <property type="nucleotide sequence ID" value="NZ_CP155539.1"/>
</dbReference>
<dbReference type="SMR" id="P0A4M7"/>
<dbReference type="PaxDb" id="170187-SP_1890"/>
<dbReference type="EnsemblBacteria" id="AAK75961">
    <property type="protein sequence ID" value="AAK75961"/>
    <property type="gene ID" value="SP_1890"/>
</dbReference>
<dbReference type="KEGG" id="spn:SP_1890"/>
<dbReference type="eggNOG" id="COG0601">
    <property type="taxonomic scope" value="Bacteria"/>
</dbReference>
<dbReference type="PhylomeDB" id="P0A4M7"/>
<dbReference type="BioCyc" id="SPNE170187:G1FZB-1920-MONOMER"/>
<dbReference type="Proteomes" id="UP000000585">
    <property type="component" value="Chromosome"/>
</dbReference>
<dbReference type="GO" id="GO:0005886">
    <property type="term" value="C:plasma membrane"/>
    <property type="evidence" value="ECO:0007669"/>
    <property type="project" value="UniProtKB-SubCell"/>
</dbReference>
<dbReference type="GO" id="GO:0015833">
    <property type="term" value="P:peptide transport"/>
    <property type="evidence" value="ECO:0007669"/>
    <property type="project" value="UniProtKB-KW"/>
</dbReference>
<dbReference type="GO" id="GO:0015031">
    <property type="term" value="P:protein transport"/>
    <property type="evidence" value="ECO:0007669"/>
    <property type="project" value="UniProtKB-KW"/>
</dbReference>
<dbReference type="GO" id="GO:0055085">
    <property type="term" value="P:transmembrane transport"/>
    <property type="evidence" value="ECO:0007669"/>
    <property type="project" value="InterPro"/>
</dbReference>
<dbReference type="CDD" id="cd06261">
    <property type="entry name" value="TM_PBP2"/>
    <property type="match status" value="1"/>
</dbReference>
<dbReference type="Gene3D" id="1.10.3720.10">
    <property type="entry name" value="MetI-like"/>
    <property type="match status" value="1"/>
</dbReference>
<dbReference type="InterPro" id="IPR000515">
    <property type="entry name" value="MetI-like"/>
</dbReference>
<dbReference type="InterPro" id="IPR035906">
    <property type="entry name" value="MetI-like_sf"/>
</dbReference>
<dbReference type="PANTHER" id="PTHR30465">
    <property type="entry name" value="INNER MEMBRANE ABC TRANSPORTER"/>
    <property type="match status" value="1"/>
</dbReference>
<dbReference type="PANTHER" id="PTHR30465:SF0">
    <property type="entry name" value="OLIGOPEPTIDE TRANSPORT SYSTEM PERMEASE PROTEIN APPB"/>
    <property type="match status" value="1"/>
</dbReference>
<dbReference type="Pfam" id="PF00528">
    <property type="entry name" value="BPD_transp_1"/>
    <property type="match status" value="1"/>
</dbReference>
<dbReference type="SUPFAM" id="SSF161098">
    <property type="entry name" value="MetI-like"/>
    <property type="match status" value="1"/>
</dbReference>
<dbReference type="PROSITE" id="PS50928">
    <property type="entry name" value="ABC_TM1"/>
    <property type="match status" value="1"/>
</dbReference>
<name>AMIC_STRPN</name>
<keyword id="KW-1003">Cell membrane</keyword>
<keyword id="KW-0472">Membrane</keyword>
<keyword id="KW-0571">Peptide transport</keyword>
<keyword id="KW-0653">Protein transport</keyword>
<keyword id="KW-1185">Reference proteome</keyword>
<keyword id="KW-0812">Transmembrane</keyword>
<keyword id="KW-1133">Transmembrane helix</keyword>
<keyword id="KW-0813">Transport</keyword>
<organism>
    <name type="scientific">Streptococcus pneumoniae serotype 4 (strain ATCC BAA-334 / TIGR4)</name>
    <dbReference type="NCBI Taxonomy" id="170187"/>
    <lineage>
        <taxon>Bacteria</taxon>
        <taxon>Bacillati</taxon>
        <taxon>Bacillota</taxon>
        <taxon>Bacilli</taxon>
        <taxon>Lactobacillales</taxon>
        <taxon>Streptococcaceae</taxon>
        <taxon>Streptococcus</taxon>
    </lineage>
</organism>
<feature type="chain" id="PRO_0000059943" description="Oligopeptide transport system permease protein AmiC">
    <location>
        <begin position="1"/>
        <end position="498"/>
    </location>
</feature>
<feature type="transmembrane region" description="Helical" evidence="2">
    <location>
        <begin position="12"/>
        <end position="32"/>
    </location>
</feature>
<feature type="transmembrane region" description="Helical" evidence="2">
    <location>
        <begin position="279"/>
        <end position="299"/>
    </location>
</feature>
<feature type="transmembrane region" description="Helical" evidence="2">
    <location>
        <begin position="316"/>
        <end position="336"/>
    </location>
</feature>
<feature type="transmembrane region" description="Helical" evidence="2">
    <location>
        <begin position="359"/>
        <end position="379"/>
    </location>
</feature>
<feature type="transmembrane region" description="Helical" evidence="2">
    <location>
        <begin position="415"/>
        <end position="435"/>
    </location>
</feature>
<feature type="transmembrane region" description="Helical" evidence="2">
    <location>
        <begin position="461"/>
        <end position="481"/>
    </location>
</feature>
<feature type="domain" description="ABC transmembrane type-1" evidence="2">
    <location>
        <begin position="280"/>
        <end position="479"/>
    </location>
</feature>
<sequence length="498" mass="55623">MKKYIFMRVLRSLVSIFLVTTLTYTIIYTLVPRKLIFKQDPNYNKIATTADKRDNYENTVFERMGYIEYYDTKELQEKASSMDSSVTVEANATNKAIYEKYINQLGHGWTLGEFTESGQFYATREIPIFERVFHFYANLIDIDHTNKIQDPENPDLKRYLRFENDPAIGWSLVGSGTKHKYLLYFNSQFPFVHQNFVNLNLGDSYPTYANTPVLQVITQGQGQTKTAQVQFPTGKKTSSVNIYSRTYKSPSQADSREVASYGKDDPYTATESNYQYPSMIVSSAITGLIGLVLAYALAVPLGSAMARFKNTWIDSLSTGALTFLLALPTIALVYIVRLIGSSIALPDSFPILGAGDWRSYVLPAVILGLLGAPGTAIWIRRYMIDLQSQDFVRFARAKGLSEKEISNKHIFKNAMVPLVSGIPAAIIGVIGGATLTETVFAFPGMGKMLIDSVKASNNSMVVGLVFIFTCISIFSRLLGDIWMTIIDPRIKLTEKGGK</sequence>
<proteinExistence type="inferred from homology"/>
<evidence type="ECO:0000250" key="1"/>
<evidence type="ECO:0000255" key="2">
    <source>
        <dbReference type="PROSITE-ProRule" id="PRU00441"/>
    </source>
</evidence>
<evidence type="ECO:0000305" key="3"/>